<feature type="chain" id="PRO_1000145362" description="Peptide methionine sulfoxide reductase MsrB">
    <location>
        <begin position="1"/>
        <end position="143"/>
    </location>
</feature>
<feature type="domain" description="MsrB" evidence="2">
    <location>
        <begin position="16"/>
        <end position="139"/>
    </location>
</feature>
<feature type="active site" description="Nucleophile" evidence="2">
    <location>
        <position position="128"/>
    </location>
</feature>
<feature type="binding site" evidence="2">
    <location>
        <position position="55"/>
    </location>
    <ligand>
        <name>Zn(2+)</name>
        <dbReference type="ChEBI" id="CHEBI:29105"/>
    </ligand>
</feature>
<feature type="binding site" evidence="2">
    <location>
        <position position="58"/>
    </location>
    <ligand>
        <name>Zn(2+)</name>
        <dbReference type="ChEBI" id="CHEBI:29105"/>
    </ligand>
</feature>
<feature type="binding site" evidence="2">
    <location>
        <position position="104"/>
    </location>
    <ligand>
        <name>Zn(2+)</name>
        <dbReference type="ChEBI" id="CHEBI:29105"/>
    </ligand>
</feature>
<feature type="binding site" evidence="2">
    <location>
        <position position="107"/>
    </location>
    <ligand>
        <name>Zn(2+)</name>
        <dbReference type="ChEBI" id="CHEBI:29105"/>
    </ligand>
</feature>
<gene>
    <name evidence="1" type="primary">msrB</name>
    <name type="ordered locus">BTH_I2139</name>
</gene>
<name>MSRB_BURTA</name>
<sequence>MSGDRDDKRYPYPKDDAELRRRLTPMQYEVTQHAATERPFTGEYTDTEDAGIYHCVVCGTALFESGAKYHSGCGWPSYFKPIDAEVIDEKMDYTHGMTRVEVRCNQCGAHLGHVFEDGPRDKTGLRYCINSAALNFEAKPEWK</sequence>
<reference key="1">
    <citation type="journal article" date="2005" name="BMC Genomics">
        <title>Bacterial genome adaptation to niches: divergence of the potential virulence genes in three Burkholderia species of different survival strategies.</title>
        <authorList>
            <person name="Kim H.S."/>
            <person name="Schell M.A."/>
            <person name="Yu Y."/>
            <person name="Ulrich R.L."/>
            <person name="Sarria S.H."/>
            <person name="Nierman W.C."/>
            <person name="DeShazer D."/>
        </authorList>
    </citation>
    <scope>NUCLEOTIDE SEQUENCE [LARGE SCALE GENOMIC DNA]</scope>
    <source>
        <strain>ATCC 700388 / DSM 13276 / CCUG 48851 / CIP 106301 / E264</strain>
    </source>
</reference>
<keyword id="KW-0479">Metal-binding</keyword>
<keyword id="KW-0560">Oxidoreductase</keyword>
<keyword id="KW-0862">Zinc</keyword>
<accession>Q2SWN9</accession>
<comment type="catalytic activity">
    <reaction evidence="1">
        <text>L-methionyl-[protein] + [thioredoxin]-disulfide + H2O = L-methionyl-(R)-S-oxide-[protein] + [thioredoxin]-dithiol</text>
        <dbReference type="Rhea" id="RHEA:24164"/>
        <dbReference type="Rhea" id="RHEA-COMP:10698"/>
        <dbReference type="Rhea" id="RHEA-COMP:10700"/>
        <dbReference type="Rhea" id="RHEA-COMP:12313"/>
        <dbReference type="Rhea" id="RHEA-COMP:12314"/>
        <dbReference type="ChEBI" id="CHEBI:15377"/>
        <dbReference type="ChEBI" id="CHEBI:16044"/>
        <dbReference type="ChEBI" id="CHEBI:29950"/>
        <dbReference type="ChEBI" id="CHEBI:45764"/>
        <dbReference type="ChEBI" id="CHEBI:50058"/>
        <dbReference type="EC" id="1.8.4.12"/>
    </reaction>
</comment>
<comment type="cofactor">
    <cofactor evidence="1">
        <name>Zn(2+)</name>
        <dbReference type="ChEBI" id="CHEBI:29105"/>
    </cofactor>
    <text evidence="1">Binds 1 zinc ion per subunit. The zinc ion is important for the structural integrity of the protein.</text>
</comment>
<comment type="similarity">
    <text evidence="1">Belongs to the MsrB Met sulfoxide reductase family.</text>
</comment>
<organism>
    <name type="scientific">Burkholderia thailandensis (strain ATCC 700388 / DSM 13276 / CCUG 48851 / CIP 106301 / E264)</name>
    <dbReference type="NCBI Taxonomy" id="271848"/>
    <lineage>
        <taxon>Bacteria</taxon>
        <taxon>Pseudomonadati</taxon>
        <taxon>Pseudomonadota</taxon>
        <taxon>Betaproteobacteria</taxon>
        <taxon>Burkholderiales</taxon>
        <taxon>Burkholderiaceae</taxon>
        <taxon>Burkholderia</taxon>
        <taxon>pseudomallei group</taxon>
    </lineage>
</organism>
<protein>
    <recommendedName>
        <fullName evidence="1">Peptide methionine sulfoxide reductase MsrB</fullName>
        <ecNumber evidence="1">1.8.4.12</ecNumber>
    </recommendedName>
    <alternativeName>
        <fullName evidence="1">Peptide-methionine (R)-S-oxide reductase</fullName>
    </alternativeName>
</protein>
<dbReference type="EC" id="1.8.4.12" evidence="1"/>
<dbReference type="EMBL" id="CP000086">
    <property type="protein sequence ID" value="ABC39078.1"/>
    <property type="molecule type" value="Genomic_DNA"/>
</dbReference>
<dbReference type="RefSeq" id="WP_009890642.1">
    <property type="nucleotide sequence ID" value="NZ_CP008785.1"/>
</dbReference>
<dbReference type="SMR" id="Q2SWN9"/>
<dbReference type="GeneID" id="45121861"/>
<dbReference type="KEGG" id="bte:BTH_I2139"/>
<dbReference type="HOGENOM" id="CLU_031040_8_5_4"/>
<dbReference type="Proteomes" id="UP000001930">
    <property type="component" value="Chromosome I"/>
</dbReference>
<dbReference type="GO" id="GO:0005737">
    <property type="term" value="C:cytoplasm"/>
    <property type="evidence" value="ECO:0007669"/>
    <property type="project" value="TreeGrafter"/>
</dbReference>
<dbReference type="GO" id="GO:0033743">
    <property type="term" value="F:peptide-methionine (R)-S-oxide reductase activity"/>
    <property type="evidence" value="ECO:0007669"/>
    <property type="project" value="UniProtKB-UniRule"/>
</dbReference>
<dbReference type="GO" id="GO:0008270">
    <property type="term" value="F:zinc ion binding"/>
    <property type="evidence" value="ECO:0007669"/>
    <property type="project" value="UniProtKB-UniRule"/>
</dbReference>
<dbReference type="GO" id="GO:0030091">
    <property type="term" value="P:protein repair"/>
    <property type="evidence" value="ECO:0007669"/>
    <property type="project" value="InterPro"/>
</dbReference>
<dbReference type="GO" id="GO:0006979">
    <property type="term" value="P:response to oxidative stress"/>
    <property type="evidence" value="ECO:0007669"/>
    <property type="project" value="InterPro"/>
</dbReference>
<dbReference type="FunFam" id="2.170.150.20:FF:000003">
    <property type="entry name" value="Peptide methionine sulfoxide reductase MsrB"/>
    <property type="match status" value="1"/>
</dbReference>
<dbReference type="Gene3D" id="2.170.150.20">
    <property type="entry name" value="Peptide methionine sulfoxide reductase"/>
    <property type="match status" value="1"/>
</dbReference>
<dbReference type="HAMAP" id="MF_01400">
    <property type="entry name" value="MsrB"/>
    <property type="match status" value="1"/>
</dbReference>
<dbReference type="InterPro" id="IPR028427">
    <property type="entry name" value="Met_Sox_Rdtase_MsrB"/>
</dbReference>
<dbReference type="InterPro" id="IPR002579">
    <property type="entry name" value="Met_Sox_Rdtase_MsrB_dom"/>
</dbReference>
<dbReference type="InterPro" id="IPR011057">
    <property type="entry name" value="Mss4-like_sf"/>
</dbReference>
<dbReference type="NCBIfam" id="TIGR00357">
    <property type="entry name" value="peptide-methionine (R)-S-oxide reductase MsrB"/>
    <property type="match status" value="1"/>
</dbReference>
<dbReference type="PANTHER" id="PTHR10173">
    <property type="entry name" value="METHIONINE SULFOXIDE REDUCTASE"/>
    <property type="match status" value="1"/>
</dbReference>
<dbReference type="PANTHER" id="PTHR10173:SF52">
    <property type="entry name" value="METHIONINE-R-SULFOXIDE REDUCTASE B1"/>
    <property type="match status" value="1"/>
</dbReference>
<dbReference type="Pfam" id="PF01641">
    <property type="entry name" value="SelR"/>
    <property type="match status" value="1"/>
</dbReference>
<dbReference type="SUPFAM" id="SSF51316">
    <property type="entry name" value="Mss4-like"/>
    <property type="match status" value="1"/>
</dbReference>
<dbReference type="PROSITE" id="PS51790">
    <property type="entry name" value="MSRB"/>
    <property type="match status" value="1"/>
</dbReference>
<evidence type="ECO:0000255" key="1">
    <source>
        <dbReference type="HAMAP-Rule" id="MF_01400"/>
    </source>
</evidence>
<evidence type="ECO:0000255" key="2">
    <source>
        <dbReference type="PROSITE-ProRule" id="PRU01126"/>
    </source>
</evidence>
<proteinExistence type="inferred from homology"/>